<sequence>MAKKNYGQVYNILGWGDPYFTVNSHGHLAVKPHGRDTMSGQDIDVHSVIHRALATTITTNDGDKKPQFPMILRFPDVLKNRLDSLHAAFHGAVDSTGYASRYQGVFPIKVNQNKAVVQDLVTFGHGYSYGLEAGSKPELLIAMSCLAKAKPGAYLVCNGYKDADYVALALSARAMGLNAIIVLEMEEELDIVVEQSARLGVEPVIGVRAKLLTKIPGHFGSTAGKHGKFGMLADKIYEVAGKLKKMGKLHWLKLLHYHVGSMIPTTDIVYNAAAEAAGIYCALVKEHGATGMTTLDCGGGLGVDYDGTRSGSSDMSVAYGLEQYASSIVQAVRLTCDDNGVPHPVLCTESGRAMASHHSMIILEALSAIPEPQDEEDTHHRLLSKIQDLSSKQPRTAHTVNGGGGVDAMHSHAVELKKHGIEMYKLAKKLSKRVTGDANGIYNYHMNLSVFSLVPDFWGIGQLFPMMPVSRLNEKPTINGTLVDITCDSDGKVEKFIRDAVTLPLHPLDDAAAEHGGYYVAALLSGAYQEALACKHNLFSGPTLVRVESAGGGGAFKIVSVELGPTAEEVIGTMRYDVKNDISDVIEKVATENGVWPMVEPLMKKGLTTMPYLNDYKPPKTTF</sequence>
<comment type="catalytic activity">
    <reaction>
        <text>L-arginine + H(+) = agmatine + CO2</text>
        <dbReference type="Rhea" id="RHEA:17641"/>
        <dbReference type="ChEBI" id="CHEBI:15378"/>
        <dbReference type="ChEBI" id="CHEBI:16526"/>
        <dbReference type="ChEBI" id="CHEBI:32682"/>
        <dbReference type="ChEBI" id="CHEBI:58145"/>
        <dbReference type="EC" id="4.1.1.19"/>
    </reaction>
</comment>
<comment type="cofactor">
    <cofactor evidence="1">
        <name>pyridoxal 5'-phosphate</name>
        <dbReference type="ChEBI" id="CHEBI:597326"/>
    </cofactor>
</comment>
<comment type="cofactor">
    <cofactor evidence="1">
        <name>Mg(2+)</name>
        <dbReference type="ChEBI" id="CHEBI:18420"/>
    </cofactor>
</comment>
<comment type="pathway">
    <text>Amine and polyamine biosynthesis; agmatine biosynthesis; agmatine from L-arginine: step 1/1.</text>
</comment>
<comment type="tissue specificity">
    <text evidence="2">Expressed in stems (at protein level).</text>
</comment>
<comment type="similarity">
    <text evidence="3">Belongs to the Orn/Lys/Arg decarboxylase class-II family. SpeA subfamily.</text>
</comment>
<comment type="sequence caution" evidence="3">
    <conflict type="miscellaneous discrepancy">
        <sequence resource="EMBL-CDS" id="ACN65507"/>
    </conflict>
    <text>Sequencing errors.</text>
</comment>
<accession>Q7XRA1</accession>
<accession>A0A0P0W684</accession>
<accession>C0LN13</accession>
<organism>
    <name type="scientific">Oryza sativa subsp. japonica</name>
    <name type="common">Rice</name>
    <dbReference type="NCBI Taxonomy" id="39947"/>
    <lineage>
        <taxon>Eukaryota</taxon>
        <taxon>Viridiplantae</taxon>
        <taxon>Streptophyta</taxon>
        <taxon>Embryophyta</taxon>
        <taxon>Tracheophyta</taxon>
        <taxon>Spermatophyta</taxon>
        <taxon>Magnoliopsida</taxon>
        <taxon>Liliopsida</taxon>
        <taxon>Poales</taxon>
        <taxon>Poaceae</taxon>
        <taxon>BOP clade</taxon>
        <taxon>Oryzoideae</taxon>
        <taxon>Oryzeae</taxon>
        <taxon>Oryzinae</taxon>
        <taxon>Oryza</taxon>
        <taxon>Oryza sativa</taxon>
    </lineage>
</organism>
<reference key="1">
    <citation type="journal article" date="2010" name="Transgenic Res.">
        <title>Molecular characterization of the Arginine decarboxylase gene family in rice.</title>
        <authorList>
            <person name="Peremarti A."/>
            <person name="Bassie L."/>
            <person name="Zhu C."/>
            <person name="Christou P."/>
            <person name="Capell T."/>
        </authorList>
    </citation>
    <scope>NUCLEOTIDE SEQUENCE [MRNA]</scope>
    <scope>TISSUE SPECIFICITY</scope>
    <source>
        <strain>cv. Eyi 105</strain>
    </source>
</reference>
<reference key="2">
    <citation type="journal article" date="2002" name="Nature">
        <title>Sequence and analysis of rice chromosome 4.</title>
        <authorList>
            <person name="Feng Q."/>
            <person name="Zhang Y."/>
            <person name="Hao P."/>
            <person name="Wang S."/>
            <person name="Fu G."/>
            <person name="Huang Y."/>
            <person name="Li Y."/>
            <person name="Zhu J."/>
            <person name="Liu Y."/>
            <person name="Hu X."/>
            <person name="Jia P."/>
            <person name="Zhang Y."/>
            <person name="Zhao Q."/>
            <person name="Ying K."/>
            <person name="Yu S."/>
            <person name="Tang Y."/>
            <person name="Weng Q."/>
            <person name="Zhang L."/>
            <person name="Lu Y."/>
            <person name="Mu J."/>
            <person name="Lu Y."/>
            <person name="Zhang L.S."/>
            <person name="Yu Z."/>
            <person name="Fan D."/>
            <person name="Liu X."/>
            <person name="Lu T."/>
            <person name="Li C."/>
            <person name="Wu Y."/>
            <person name="Sun T."/>
            <person name="Lei H."/>
            <person name="Li T."/>
            <person name="Hu H."/>
            <person name="Guan J."/>
            <person name="Wu M."/>
            <person name="Zhang R."/>
            <person name="Zhou B."/>
            <person name="Chen Z."/>
            <person name="Chen L."/>
            <person name="Jin Z."/>
            <person name="Wang R."/>
            <person name="Yin H."/>
            <person name="Cai Z."/>
            <person name="Ren S."/>
            <person name="Lv G."/>
            <person name="Gu W."/>
            <person name="Zhu G."/>
            <person name="Tu Y."/>
            <person name="Jia J."/>
            <person name="Zhang Y."/>
            <person name="Chen J."/>
            <person name="Kang H."/>
            <person name="Chen X."/>
            <person name="Shao C."/>
            <person name="Sun Y."/>
            <person name="Hu Q."/>
            <person name="Zhang X."/>
            <person name="Zhang W."/>
            <person name="Wang L."/>
            <person name="Ding C."/>
            <person name="Sheng H."/>
            <person name="Gu J."/>
            <person name="Chen S."/>
            <person name="Ni L."/>
            <person name="Zhu F."/>
            <person name="Chen W."/>
            <person name="Lan L."/>
            <person name="Lai Y."/>
            <person name="Cheng Z."/>
            <person name="Gu M."/>
            <person name="Jiang J."/>
            <person name="Li J."/>
            <person name="Hong G."/>
            <person name="Xue Y."/>
            <person name="Han B."/>
        </authorList>
    </citation>
    <scope>NUCLEOTIDE SEQUENCE [LARGE SCALE GENOMIC DNA]</scope>
    <source>
        <strain>cv. Nipponbare</strain>
    </source>
</reference>
<reference key="3">
    <citation type="journal article" date="2005" name="Nature">
        <title>The map-based sequence of the rice genome.</title>
        <authorList>
            <consortium name="International rice genome sequencing project (IRGSP)"/>
        </authorList>
    </citation>
    <scope>NUCLEOTIDE SEQUENCE [LARGE SCALE GENOMIC DNA]</scope>
    <source>
        <strain>cv. Nipponbare</strain>
    </source>
</reference>
<reference key="4">
    <citation type="journal article" date="2008" name="Nucleic Acids Res.">
        <title>The rice annotation project database (RAP-DB): 2008 update.</title>
        <authorList>
            <consortium name="The rice annotation project (RAP)"/>
        </authorList>
    </citation>
    <scope>GENOME REANNOTATION</scope>
    <source>
        <strain>cv. Nipponbare</strain>
    </source>
</reference>
<reference key="5">
    <citation type="journal article" date="2013" name="Rice">
        <title>Improvement of the Oryza sativa Nipponbare reference genome using next generation sequence and optical map data.</title>
        <authorList>
            <person name="Kawahara Y."/>
            <person name="de la Bastide M."/>
            <person name="Hamilton J.P."/>
            <person name="Kanamori H."/>
            <person name="McCombie W.R."/>
            <person name="Ouyang S."/>
            <person name="Schwartz D.C."/>
            <person name="Tanaka T."/>
            <person name="Wu J."/>
            <person name="Zhou S."/>
            <person name="Childs K.L."/>
            <person name="Davidson R.M."/>
            <person name="Lin H."/>
            <person name="Quesada-Ocampo L."/>
            <person name="Vaillancourt B."/>
            <person name="Sakai H."/>
            <person name="Lee S.S."/>
            <person name="Kim J."/>
            <person name="Numa H."/>
            <person name="Itoh T."/>
            <person name="Buell C.R."/>
            <person name="Matsumoto T."/>
        </authorList>
    </citation>
    <scope>GENOME REANNOTATION</scope>
    <source>
        <strain>cv. Nipponbare</strain>
    </source>
</reference>
<reference key="6">
    <citation type="journal article" date="2005" name="PLoS Biol.">
        <title>The genomes of Oryza sativa: a history of duplications.</title>
        <authorList>
            <person name="Yu J."/>
            <person name="Wang J."/>
            <person name="Lin W."/>
            <person name="Li S."/>
            <person name="Li H."/>
            <person name="Zhou J."/>
            <person name="Ni P."/>
            <person name="Dong W."/>
            <person name="Hu S."/>
            <person name="Zeng C."/>
            <person name="Zhang J."/>
            <person name="Zhang Y."/>
            <person name="Li R."/>
            <person name="Xu Z."/>
            <person name="Li S."/>
            <person name="Li X."/>
            <person name="Zheng H."/>
            <person name="Cong L."/>
            <person name="Lin L."/>
            <person name="Yin J."/>
            <person name="Geng J."/>
            <person name="Li G."/>
            <person name="Shi J."/>
            <person name="Liu J."/>
            <person name="Lv H."/>
            <person name="Li J."/>
            <person name="Wang J."/>
            <person name="Deng Y."/>
            <person name="Ran L."/>
            <person name="Shi X."/>
            <person name="Wang X."/>
            <person name="Wu Q."/>
            <person name="Li C."/>
            <person name="Ren X."/>
            <person name="Wang J."/>
            <person name="Wang X."/>
            <person name="Li D."/>
            <person name="Liu D."/>
            <person name="Zhang X."/>
            <person name="Ji Z."/>
            <person name="Zhao W."/>
            <person name="Sun Y."/>
            <person name="Zhang Z."/>
            <person name="Bao J."/>
            <person name="Han Y."/>
            <person name="Dong L."/>
            <person name="Ji J."/>
            <person name="Chen P."/>
            <person name="Wu S."/>
            <person name="Liu J."/>
            <person name="Xiao Y."/>
            <person name="Bu D."/>
            <person name="Tan J."/>
            <person name="Yang L."/>
            <person name="Ye C."/>
            <person name="Zhang J."/>
            <person name="Xu J."/>
            <person name="Zhou Y."/>
            <person name="Yu Y."/>
            <person name="Zhang B."/>
            <person name="Zhuang S."/>
            <person name="Wei H."/>
            <person name="Liu B."/>
            <person name="Lei M."/>
            <person name="Yu H."/>
            <person name="Li Y."/>
            <person name="Xu H."/>
            <person name="Wei S."/>
            <person name="He X."/>
            <person name="Fang L."/>
            <person name="Zhang Z."/>
            <person name="Zhang Y."/>
            <person name="Huang X."/>
            <person name="Su Z."/>
            <person name="Tong W."/>
            <person name="Li J."/>
            <person name="Tong Z."/>
            <person name="Li S."/>
            <person name="Ye J."/>
            <person name="Wang L."/>
            <person name="Fang L."/>
            <person name="Lei T."/>
            <person name="Chen C.-S."/>
            <person name="Chen H.-C."/>
            <person name="Xu Z."/>
            <person name="Li H."/>
            <person name="Huang H."/>
            <person name="Zhang F."/>
            <person name="Xu H."/>
            <person name="Li N."/>
            <person name="Zhao C."/>
            <person name="Li S."/>
            <person name="Dong L."/>
            <person name="Huang Y."/>
            <person name="Li L."/>
            <person name="Xi Y."/>
            <person name="Qi Q."/>
            <person name="Li W."/>
            <person name="Zhang B."/>
            <person name="Hu W."/>
            <person name="Zhang Y."/>
            <person name="Tian X."/>
            <person name="Jiao Y."/>
            <person name="Liang X."/>
            <person name="Jin J."/>
            <person name="Gao L."/>
            <person name="Zheng W."/>
            <person name="Hao B."/>
            <person name="Liu S.-M."/>
            <person name="Wang W."/>
            <person name="Yuan L."/>
            <person name="Cao M."/>
            <person name="McDermott J."/>
            <person name="Samudrala R."/>
            <person name="Wang J."/>
            <person name="Wong G.K.-S."/>
            <person name="Yang H."/>
        </authorList>
    </citation>
    <scope>NUCLEOTIDE SEQUENCE [LARGE SCALE GENOMIC DNA]</scope>
    <source>
        <strain>cv. Nipponbare</strain>
    </source>
</reference>
<reference key="7">
    <citation type="journal article" date="2003" name="Science">
        <title>Collection, mapping, and annotation of over 28,000 cDNA clones from japonica rice.</title>
        <authorList>
            <consortium name="The rice full-length cDNA consortium"/>
        </authorList>
    </citation>
    <scope>NUCLEOTIDE SEQUENCE [LARGE SCALE MRNA]</scope>
    <source>
        <strain>cv. Nipponbare</strain>
    </source>
</reference>
<evidence type="ECO:0000250" key="1"/>
<evidence type="ECO:0000269" key="2">
    <source>
    </source>
</evidence>
<evidence type="ECO:0000305" key="3"/>
<keyword id="KW-0210">Decarboxylase</keyword>
<keyword id="KW-0456">Lyase</keyword>
<keyword id="KW-0460">Magnesium</keyword>
<keyword id="KW-0661">Putrescine biosynthesis</keyword>
<keyword id="KW-0663">Pyridoxal phosphate</keyword>
<keyword id="KW-1185">Reference proteome</keyword>
<keyword id="KW-0745">Spermidine biosynthesis</keyword>
<name>ADC2_ORYSJ</name>
<proteinExistence type="evidence at protein level"/>
<protein>
    <recommendedName>
        <fullName>Arginine decarboxylase 2</fullName>
        <shortName>ARGDC2</shortName>
        <shortName>OsADC2</shortName>
        <ecNumber>4.1.1.19</ecNumber>
    </recommendedName>
</protein>
<feature type="chain" id="PRO_0000392206" description="Arginine decarboxylase 2">
    <location>
        <begin position="1"/>
        <end position="623"/>
    </location>
</feature>
<feature type="binding site" evidence="1">
    <location>
        <begin position="295"/>
        <end position="305"/>
    </location>
    <ligand>
        <name>substrate</name>
    </ligand>
</feature>
<feature type="modified residue" description="N6-(pyridoxal phosphate)lysine" evidence="1">
    <location>
        <position position="109"/>
    </location>
</feature>
<gene>
    <name type="primary">ADC2</name>
    <name type="ordered locus">Os04g0107600</name>
    <name type="ordered locus">LOC_Os04g01690</name>
    <name type="ORF">OsJ_13525</name>
    <name type="ORF">OSJNBb0085F13.14</name>
</gene>
<dbReference type="EC" id="4.1.1.19"/>
<dbReference type="EMBL" id="FJ746894">
    <property type="protein sequence ID" value="ACN65507.1"/>
    <property type="status" value="ALT_SEQ"/>
    <property type="molecule type" value="mRNA"/>
</dbReference>
<dbReference type="EMBL" id="AL606620">
    <property type="protein sequence ID" value="CAE02767.2"/>
    <property type="molecule type" value="Genomic_DNA"/>
</dbReference>
<dbReference type="EMBL" id="AP008210">
    <property type="protein sequence ID" value="BAF13932.1"/>
    <property type="molecule type" value="Genomic_DNA"/>
</dbReference>
<dbReference type="EMBL" id="AP014960">
    <property type="protein sequence ID" value="BAS87548.1"/>
    <property type="molecule type" value="Genomic_DNA"/>
</dbReference>
<dbReference type="EMBL" id="CM000141">
    <property type="protein sequence ID" value="EAZ29450.1"/>
    <property type="molecule type" value="Genomic_DNA"/>
</dbReference>
<dbReference type="EMBL" id="AK058573">
    <property type="protein sequence ID" value="BAG86737.1"/>
    <property type="molecule type" value="mRNA"/>
</dbReference>
<dbReference type="EMBL" id="AK121110">
    <property type="protein sequence ID" value="BAH00321.1"/>
    <property type="molecule type" value="mRNA"/>
</dbReference>
<dbReference type="RefSeq" id="XP_015633833.1">
    <property type="nucleotide sequence ID" value="XM_015778347.1"/>
</dbReference>
<dbReference type="RefSeq" id="XP_015633834.1">
    <property type="nucleotide sequence ID" value="XM_015778348.1"/>
</dbReference>
<dbReference type="SMR" id="Q7XRA1"/>
<dbReference type="FunCoup" id="Q7XRA1">
    <property type="interactions" value="1"/>
</dbReference>
<dbReference type="STRING" id="39947.Q7XRA1"/>
<dbReference type="PaxDb" id="39947-Q7XRA1"/>
<dbReference type="EnsemblPlants" id="Os04t0107600-01">
    <property type="protein sequence ID" value="Os04t0107600-01"/>
    <property type="gene ID" value="Os04g0107600"/>
</dbReference>
<dbReference type="EnsemblPlants" id="Os04t0107600-02">
    <property type="protein sequence ID" value="Os04t0107600-02"/>
    <property type="gene ID" value="Os04g0107600"/>
</dbReference>
<dbReference type="Gramene" id="Os04t0107600-01">
    <property type="protein sequence ID" value="Os04t0107600-01"/>
    <property type="gene ID" value="Os04g0107600"/>
</dbReference>
<dbReference type="Gramene" id="Os04t0107600-02">
    <property type="protein sequence ID" value="Os04t0107600-02"/>
    <property type="gene ID" value="Os04g0107600"/>
</dbReference>
<dbReference type="KEGG" id="dosa:Os04g0107600"/>
<dbReference type="eggNOG" id="ENOG502QTXD">
    <property type="taxonomic scope" value="Eukaryota"/>
</dbReference>
<dbReference type="HOGENOM" id="CLU_027243_0_0_1"/>
<dbReference type="InParanoid" id="Q7XRA1"/>
<dbReference type="OrthoDB" id="3717802at2759"/>
<dbReference type="PlantReactome" id="R-OSA-1119304">
    <property type="pathway name" value="Putrescine biosynthesis II"/>
</dbReference>
<dbReference type="PlantReactome" id="R-OSA-1119447">
    <property type="pathway name" value="Putrescine biosynthesis I"/>
</dbReference>
<dbReference type="UniPathway" id="UPA00186">
    <property type="reaction ID" value="UER00284"/>
</dbReference>
<dbReference type="Proteomes" id="UP000000763">
    <property type="component" value="Chromosome 4"/>
</dbReference>
<dbReference type="Proteomes" id="UP000007752">
    <property type="component" value="Chromosome 4"/>
</dbReference>
<dbReference type="Proteomes" id="UP000059680">
    <property type="component" value="Chromosome 4"/>
</dbReference>
<dbReference type="GO" id="GO:0008792">
    <property type="term" value="F:arginine decarboxylase activity"/>
    <property type="evidence" value="ECO:0000318"/>
    <property type="project" value="GO_Central"/>
</dbReference>
<dbReference type="GO" id="GO:0006527">
    <property type="term" value="P:arginine catabolic process"/>
    <property type="evidence" value="ECO:0007669"/>
    <property type="project" value="InterPro"/>
</dbReference>
<dbReference type="GO" id="GO:0009446">
    <property type="term" value="P:putrescine biosynthetic process"/>
    <property type="evidence" value="ECO:0007669"/>
    <property type="project" value="UniProtKB-KW"/>
</dbReference>
<dbReference type="GO" id="GO:0008295">
    <property type="term" value="P:spermidine biosynthetic process"/>
    <property type="evidence" value="ECO:0007669"/>
    <property type="project" value="UniProtKB-KW"/>
</dbReference>
<dbReference type="CDD" id="cd06830">
    <property type="entry name" value="PLPDE_III_ADC"/>
    <property type="match status" value="1"/>
</dbReference>
<dbReference type="FunFam" id="1.20.58.930:FF:000006">
    <property type="entry name" value="Arginine decarboxylase"/>
    <property type="match status" value="1"/>
</dbReference>
<dbReference type="FunFam" id="3.20.20.10:FF:000001">
    <property type="entry name" value="Biosynthetic arginine decarboxylase"/>
    <property type="match status" value="1"/>
</dbReference>
<dbReference type="Gene3D" id="1.20.58.930">
    <property type="match status" value="1"/>
</dbReference>
<dbReference type="Gene3D" id="3.20.20.10">
    <property type="entry name" value="Alanine racemase"/>
    <property type="match status" value="1"/>
</dbReference>
<dbReference type="Gene3D" id="2.40.37.10">
    <property type="entry name" value="Lyase, Ornithine Decarboxylase, Chain A, domain 1"/>
    <property type="match status" value="1"/>
</dbReference>
<dbReference type="InterPro" id="IPR009006">
    <property type="entry name" value="Ala_racemase/Decarboxylase_C"/>
</dbReference>
<dbReference type="InterPro" id="IPR002985">
    <property type="entry name" value="Arg_decrbxlase"/>
</dbReference>
<dbReference type="InterPro" id="IPR022657">
    <property type="entry name" value="De-COase2_CS"/>
</dbReference>
<dbReference type="InterPro" id="IPR022644">
    <property type="entry name" value="De-COase2_N"/>
</dbReference>
<dbReference type="InterPro" id="IPR022653">
    <property type="entry name" value="De-COase2_pyr-phos_BS"/>
</dbReference>
<dbReference type="InterPro" id="IPR000183">
    <property type="entry name" value="Orn/DAP/Arg_de-COase"/>
</dbReference>
<dbReference type="InterPro" id="IPR029066">
    <property type="entry name" value="PLP-binding_barrel"/>
</dbReference>
<dbReference type="NCBIfam" id="NF003763">
    <property type="entry name" value="PRK05354.1"/>
    <property type="match status" value="1"/>
</dbReference>
<dbReference type="NCBIfam" id="TIGR01273">
    <property type="entry name" value="speA"/>
    <property type="match status" value="1"/>
</dbReference>
<dbReference type="PANTHER" id="PTHR43295">
    <property type="entry name" value="ARGININE DECARBOXYLASE"/>
    <property type="match status" value="1"/>
</dbReference>
<dbReference type="PANTHER" id="PTHR43295:SF2">
    <property type="entry name" value="ARGININE DECARBOXYLASE 2"/>
    <property type="match status" value="1"/>
</dbReference>
<dbReference type="Pfam" id="PF02784">
    <property type="entry name" value="Orn_Arg_deC_N"/>
    <property type="match status" value="1"/>
</dbReference>
<dbReference type="PIRSF" id="PIRSF001336">
    <property type="entry name" value="Arg_decrbxlase"/>
    <property type="match status" value="1"/>
</dbReference>
<dbReference type="PRINTS" id="PR01180">
    <property type="entry name" value="ARGDCRBXLASE"/>
</dbReference>
<dbReference type="PRINTS" id="PR01179">
    <property type="entry name" value="ODADCRBXLASE"/>
</dbReference>
<dbReference type="SUPFAM" id="SSF50621">
    <property type="entry name" value="Alanine racemase C-terminal domain-like"/>
    <property type="match status" value="1"/>
</dbReference>
<dbReference type="SUPFAM" id="SSF51419">
    <property type="entry name" value="PLP-binding barrel"/>
    <property type="match status" value="1"/>
</dbReference>
<dbReference type="PROSITE" id="PS00878">
    <property type="entry name" value="ODR_DC_2_1"/>
    <property type="match status" value="1"/>
</dbReference>
<dbReference type="PROSITE" id="PS00879">
    <property type="entry name" value="ODR_DC_2_2"/>
    <property type="match status" value="1"/>
</dbReference>